<sequence length="255" mass="28422">MWIGIISLFPEMFRAITDYGVTGRAVKNGLLSIQSWSPRDFTHDRHRTVDDRPYGGGPGMLMMVQPLRDAIHAAKAAAGEGAKVIYLSPQGRKLDQAGVSELATNQKLILVCGRYEGIDERVIQTEIDEEWSIGDYVLSGGELPAMTLIDSVSRFIPGVLGHEASATEDSFAEGLLDCPHYTRPEVLEGMEVPPVLLSGNHAEIRRWRLKQSLGRTWLRRPELLENLALTEEQARLLAEFKTEHAQQQHKHDGMA</sequence>
<organism>
    <name type="scientific">Escherichia coli O157:H7</name>
    <dbReference type="NCBI Taxonomy" id="83334"/>
    <lineage>
        <taxon>Bacteria</taxon>
        <taxon>Pseudomonadati</taxon>
        <taxon>Pseudomonadota</taxon>
        <taxon>Gammaproteobacteria</taxon>
        <taxon>Enterobacterales</taxon>
        <taxon>Enterobacteriaceae</taxon>
        <taxon>Escherichia</taxon>
    </lineage>
</organism>
<feature type="chain" id="PRO_0000060376" description="tRNA (guanine-N(1)-)-methyltransferase">
    <location>
        <begin position="1"/>
        <end position="255"/>
    </location>
</feature>
<feature type="binding site" evidence="1">
    <location>
        <position position="113"/>
    </location>
    <ligand>
        <name>S-adenosyl-L-methionine</name>
        <dbReference type="ChEBI" id="CHEBI:59789"/>
    </ligand>
</feature>
<feature type="binding site" evidence="1">
    <location>
        <begin position="133"/>
        <end position="138"/>
    </location>
    <ligand>
        <name>S-adenosyl-L-methionine</name>
        <dbReference type="ChEBI" id="CHEBI:59789"/>
    </ligand>
</feature>
<gene>
    <name type="primary">trmD</name>
    <name type="ordered locus">Z3901</name>
    <name type="ordered locus">ECs3470</name>
</gene>
<evidence type="ECO:0000250" key="1"/>
<evidence type="ECO:0000305" key="2"/>
<keyword id="KW-0963">Cytoplasm</keyword>
<keyword id="KW-0489">Methyltransferase</keyword>
<keyword id="KW-1185">Reference proteome</keyword>
<keyword id="KW-0949">S-adenosyl-L-methionine</keyword>
<keyword id="KW-0808">Transferase</keyword>
<keyword id="KW-0819">tRNA processing</keyword>
<reference key="1">
    <citation type="journal article" date="2001" name="Nature">
        <title>Genome sequence of enterohaemorrhagic Escherichia coli O157:H7.</title>
        <authorList>
            <person name="Perna N.T."/>
            <person name="Plunkett G. III"/>
            <person name="Burland V."/>
            <person name="Mau B."/>
            <person name="Glasner J.D."/>
            <person name="Rose D.J."/>
            <person name="Mayhew G.F."/>
            <person name="Evans P.S."/>
            <person name="Gregor J."/>
            <person name="Kirkpatrick H.A."/>
            <person name="Posfai G."/>
            <person name="Hackett J."/>
            <person name="Klink S."/>
            <person name="Boutin A."/>
            <person name="Shao Y."/>
            <person name="Miller L."/>
            <person name="Grotbeck E.J."/>
            <person name="Davis N.W."/>
            <person name="Lim A."/>
            <person name="Dimalanta E.T."/>
            <person name="Potamousis K."/>
            <person name="Apodaca J."/>
            <person name="Anantharaman T.S."/>
            <person name="Lin J."/>
            <person name="Yen G."/>
            <person name="Schwartz D.C."/>
            <person name="Welch R.A."/>
            <person name="Blattner F.R."/>
        </authorList>
    </citation>
    <scope>NUCLEOTIDE SEQUENCE [LARGE SCALE GENOMIC DNA]</scope>
    <source>
        <strain>O157:H7 / EDL933 / ATCC 700927 / EHEC</strain>
    </source>
</reference>
<reference key="2">
    <citation type="journal article" date="2001" name="DNA Res.">
        <title>Complete genome sequence of enterohemorrhagic Escherichia coli O157:H7 and genomic comparison with a laboratory strain K-12.</title>
        <authorList>
            <person name="Hayashi T."/>
            <person name="Makino K."/>
            <person name="Ohnishi M."/>
            <person name="Kurokawa K."/>
            <person name="Ishii K."/>
            <person name="Yokoyama K."/>
            <person name="Han C.-G."/>
            <person name="Ohtsubo E."/>
            <person name="Nakayama K."/>
            <person name="Murata T."/>
            <person name="Tanaka M."/>
            <person name="Tobe T."/>
            <person name="Iida T."/>
            <person name="Takami H."/>
            <person name="Honda T."/>
            <person name="Sasakawa C."/>
            <person name="Ogasawara N."/>
            <person name="Yasunaga T."/>
            <person name="Kuhara S."/>
            <person name="Shiba T."/>
            <person name="Hattori M."/>
            <person name="Shinagawa H."/>
        </authorList>
    </citation>
    <scope>NUCLEOTIDE SEQUENCE [LARGE SCALE GENOMIC DNA]</scope>
    <source>
        <strain>O157:H7 / Sakai / RIMD 0509952 / EHEC</strain>
    </source>
</reference>
<proteinExistence type="inferred from homology"/>
<name>TRMD_ECO57</name>
<protein>
    <recommendedName>
        <fullName>tRNA (guanine-N(1)-)-methyltransferase</fullName>
        <ecNumber>2.1.1.228</ecNumber>
    </recommendedName>
    <alternativeName>
        <fullName>M1G-methyltransferase</fullName>
    </alternativeName>
    <alternativeName>
        <fullName>tRNA [GM37] methyltransferase</fullName>
    </alternativeName>
</protein>
<accession>P0A875</accession>
<accession>P07020</accession>
<dbReference type="EC" id="2.1.1.228"/>
<dbReference type="EMBL" id="AE005174">
    <property type="protein sequence ID" value="AAG57718.1"/>
    <property type="molecule type" value="Genomic_DNA"/>
</dbReference>
<dbReference type="EMBL" id="BA000007">
    <property type="protein sequence ID" value="BAB36893.1"/>
    <property type="molecule type" value="Genomic_DNA"/>
</dbReference>
<dbReference type="PIR" id="B85907">
    <property type="entry name" value="B85907"/>
</dbReference>
<dbReference type="PIR" id="F91062">
    <property type="entry name" value="F91062"/>
</dbReference>
<dbReference type="RefSeq" id="NP_311497.1">
    <property type="nucleotide sequence ID" value="NC_002695.1"/>
</dbReference>
<dbReference type="RefSeq" id="WP_000264777.1">
    <property type="nucleotide sequence ID" value="NZ_VOAI01000040.1"/>
</dbReference>
<dbReference type="SMR" id="P0A875"/>
<dbReference type="STRING" id="155864.Z3901"/>
<dbReference type="GeneID" id="914818"/>
<dbReference type="GeneID" id="93774457"/>
<dbReference type="KEGG" id="ece:Z3901"/>
<dbReference type="KEGG" id="ecs:ECs_3470"/>
<dbReference type="PATRIC" id="fig|386585.9.peg.3624"/>
<dbReference type="eggNOG" id="COG0336">
    <property type="taxonomic scope" value="Bacteria"/>
</dbReference>
<dbReference type="HOGENOM" id="CLU_047363_0_1_6"/>
<dbReference type="OMA" id="ILCGHYK"/>
<dbReference type="Proteomes" id="UP000000558">
    <property type="component" value="Chromosome"/>
</dbReference>
<dbReference type="Proteomes" id="UP000002519">
    <property type="component" value="Chromosome"/>
</dbReference>
<dbReference type="GO" id="GO:0005829">
    <property type="term" value="C:cytosol"/>
    <property type="evidence" value="ECO:0007669"/>
    <property type="project" value="TreeGrafter"/>
</dbReference>
<dbReference type="GO" id="GO:0052906">
    <property type="term" value="F:tRNA (guanine(37)-N1)-methyltransferase activity"/>
    <property type="evidence" value="ECO:0007669"/>
    <property type="project" value="UniProtKB-UniRule"/>
</dbReference>
<dbReference type="GO" id="GO:0002939">
    <property type="term" value="P:tRNA N1-guanine methylation"/>
    <property type="evidence" value="ECO:0007669"/>
    <property type="project" value="TreeGrafter"/>
</dbReference>
<dbReference type="CDD" id="cd18080">
    <property type="entry name" value="TrmD-like"/>
    <property type="match status" value="1"/>
</dbReference>
<dbReference type="FunFam" id="1.10.1270.20:FF:000001">
    <property type="entry name" value="tRNA (guanine-N(1)-)-methyltransferase"/>
    <property type="match status" value="1"/>
</dbReference>
<dbReference type="FunFam" id="3.40.1280.10:FF:000001">
    <property type="entry name" value="tRNA (guanine-N(1)-)-methyltransferase"/>
    <property type="match status" value="1"/>
</dbReference>
<dbReference type="Gene3D" id="3.40.1280.10">
    <property type="match status" value="1"/>
</dbReference>
<dbReference type="Gene3D" id="1.10.1270.20">
    <property type="entry name" value="tRNA(m1g37)methyltransferase, domain 2"/>
    <property type="match status" value="1"/>
</dbReference>
<dbReference type="HAMAP" id="MF_00605">
    <property type="entry name" value="TrmD"/>
    <property type="match status" value="1"/>
</dbReference>
<dbReference type="InterPro" id="IPR029028">
    <property type="entry name" value="Alpha/beta_knot_MTases"/>
</dbReference>
<dbReference type="InterPro" id="IPR023148">
    <property type="entry name" value="tRNA_m1G_MeTrfase_C_sf"/>
</dbReference>
<dbReference type="InterPro" id="IPR002649">
    <property type="entry name" value="tRNA_m1G_MeTrfase_TrmD"/>
</dbReference>
<dbReference type="InterPro" id="IPR029026">
    <property type="entry name" value="tRNA_m1G_MTases_N"/>
</dbReference>
<dbReference type="InterPro" id="IPR016009">
    <property type="entry name" value="tRNA_MeTrfase_TRMD/TRM10"/>
</dbReference>
<dbReference type="NCBIfam" id="NF000648">
    <property type="entry name" value="PRK00026.1"/>
    <property type="match status" value="1"/>
</dbReference>
<dbReference type="NCBIfam" id="TIGR00088">
    <property type="entry name" value="trmD"/>
    <property type="match status" value="1"/>
</dbReference>
<dbReference type="PANTHER" id="PTHR46417">
    <property type="entry name" value="TRNA (GUANINE-N(1)-)-METHYLTRANSFERASE"/>
    <property type="match status" value="1"/>
</dbReference>
<dbReference type="PANTHER" id="PTHR46417:SF1">
    <property type="entry name" value="TRNA (GUANINE-N(1)-)-METHYLTRANSFERASE"/>
    <property type="match status" value="1"/>
</dbReference>
<dbReference type="Pfam" id="PF01746">
    <property type="entry name" value="tRNA_m1G_MT"/>
    <property type="match status" value="1"/>
</dbReference>
<dbReference type="PIRSF" id="PIRSF000386">
    <property type="entry name" value="tRNA_mtase"/>
    <property type="match status" value="1"/>
</dbReference>
<dbReference type="SUPFAM" id="SSF75217">
    <property type="entry name" value="alpha/beta knot"/>
    <property type="match status" value="1"/>
</dbReference>
<comment type="function">
    <text evidence="1">Specifically methylates guanosine-37 in various tRNAs.</text>
</comment>
<comment type="catalytic activity">
    <reaction>
        <text>guanosine(37) in tRNA + S-adenosyl-L-methionine = N(1)-methylguanosine(37) in tRNA + S-adenosyl-L-homocysteine + H(+)</text>
        <dbReference type="Rhea" id="RHEA:36899"/>
        <dbReference type="Rhea" id="RHEA-COMP:10145"/>
        <dbReference type="Rhea" id="RHEA-COMP:10147"/>
        <dbReference type="ChEBI" id="CHEBI:15378"/>
        <dbReference type="ChEBI" id="CHEBI:57856"/>
        <dbReference type="ChEBI" id="CHEBI:59789"/>
        <dbReference type="ChEBI" id="CHEBI:73542"/>
        <dbReference type="ChEBI" id="CHEBI:74269"/>
        <dbReference type="EC" id="2.1.1.228"/>
    </reaction>
</comment>
<comment type="subunit">
    <text evidence="1">Homodimer.</text>
</comment>
<comment type="subcellular location">
    <subcellularLocation>
        <location evidence="2">Cytoplasm</location>
    </subcellularLocation>
</comment>
<comment type="similarity">
    <text evidence="2">Belongs to the RNA methyltransferase TrmD family.</text>
</comment>